<gene>
    <name evidence="1" type="primary">glyA1</name>
    <name type="ordered locus">VV1_0286</name>
</gene>
<organism>
    <name type="scientific">Vibrio vulnificus (strain CMCP6)</name>
    <dbReference type="NCBI Taxonomy" id="216895"/>
    <lineage>
        <taxon>Bacteria</taxon>
        <taxon>Pseudomonadati</taxon>
        <taxon>Pseudomonadota</taxon>
        <taxon>Gammaproteobacteria</taxon>
        <taxon>Vibrionales</taxon>
        <taxon>Vibrionaceae</taxon>
        <taxon>Vibrio</taxon>
    </lineage>
</organism>
<dbReference type="EC" id="2.1.2.1" evidence="1"/>
<dbReference type="EMBL" id="AE016795">
    <property type="protein sequence ID" value="AAO08819.1"/>
    <property type="molecule type" value="Genomic_DNA"/>
</dbReference>
<dbReference type="SMR" id="Q8DFC9"/>
<dbReference type="KEGG" id="vvu:VV1_0286"/>
<dbReference type="HOGENOM" id="CLU_022477_2_1_6"/>
<dbReference type="UniPathway" id="UPA00193"/>
<dbReference type="UniPathway" id="UPA00288">
    <property type="reaction ID" value="UER01023"/>
</dbReference>
<dbReference type="Proteomes" id="UP000002275">
    <property type="component" value="Chromosome 1"/>
</dbReference>
<dbReference type="GO" id="GO:0005829">
    <property type="term" value="C:cytosol"/>
    <property type="evidence" value="ECO:0007669"/>
    <property type="project" value="TreeGrafter"/>
</dbReference>
<dbReference type="GO" id="GO:0004372">
    <property type="term" value="F:glycine hydroxymethyltransferase activity"/>
    <property type="evidence" value="ECO:0007669"/>
    <property type="project" value="UniProtKB-UniRule"/>
</dbReference>
<dbReference type="GO" id="GO:0030170">
    <property type="term" value="F:pyridoxal phosphate binding"/>
    <property type="evidence" value="ECO:0007669"/>
    <property type="project" value="UniProtKB-UniRule"/>
</dbReference>
<dbReference type="GO" id="GO:0019264">
    <property type="term" value="P:glycine biosynthetic process from serine"/>
    <property type="evidence" value="ECO:0007669"/>
    <property type="project" value="UniProtKB-UniRule"/>
</dbReference>
<dbReference type="GO" id="GO:0035999">
    <property type="term" value="P:tetrahydrofolate interconversion"/>
    <property type="evidence" value="ECO:0007669"/>
    <property type="project" value="UniProtKB-UniRule"/>
</dbReference>
<dbReference type="CDD" id="cd00378">
    <property type="entry name" value="SHMT"/>
    <property type="match status" value="1"/>
</dbReference>
<dbReference type="FunFam" id="3.40.640.10:FF:000001">
    <property type="entry name" value="Serine hydroxymethyltransferase"/>
    <property type="match status" value="1"/>
</dbReference>
<dbReference type="FunFam" id="3.90.1150.10:FF:000003">
    <property type="entry name" value="Serine hydroxymethyltransferase"/>
    <property type="match status" value="1"/>
</dbReference>
<dbReference type="Gene3D" id="3.90.1150.10">
    <property type="entry name" value="Aspartate Aminotransferase, domain 1"/>
    <property type="match status" value="1"/>
</dbReference>
<dbReference type="Gene3D" id="3.40.640.10">
    <property type="entry name" value="Type I PLP-dependent aspartate aminotransferase-like (Major domain)"/>
    <property type="match status" value="1"/>
</dbReference>
<dbReference type="HAMAP" id="MF_00051">
    <property type="entry name" value="SHMT"/>
    <property type="match status" value="1"/>
</dbReference>
<dbReference type="InterPro" id="IPR015424">
    <property type="entry name" value="PyrdxlP-dep_Trfase"/>
</dbReference>
<dbReference type="InterPro" id="IPR015421">
    <property type="entry name" value="PyrdxlP-dep_Trfase_major"/>
</dbReference>
<dbReference type="InterPro" id="IPR015422">
    <property type="entry name" value="PyrdxlP-dep_Trfase_small"/>
</dbReference>
<dbReference type="InterPro" id="IPR001085">
    <property type="entry name" value="Ser_HO-MeTrfase"/>
</dbReference>
<dbReference type="InterPro" id="IPR049943">
    <property type="entry name" value="Ser_HO-MeTrfase-like"/>
</dbReference>
<dbReference type="InterPro" id="IPR019798">
    <property type="entry name" value="Ser_HO-MeTrfase_PLP_BS"/>
</dbReference>
<dbReference type="InterPro" id="IPR039429">
    <property type="entry name" value="SHMT-like_dom"/>
</dbReference>
<dbReference type="NCBIfam" id="NF000586">
    <property type="entry name" value="PRK00011.1"/>
    <property type="match status" value="1"/>
</dbReference>
<dbReference type="PANTHER" id="PTHR11680">
    <property type="entry name" value="SERINE HYDROXYMETHYLTRANSFERASE"/>
    <property type="match status" value="1"/>
</dbReference>
<dbReference type="PANTHER" id="PTHR11680:SF50">
    <property type="entry name" value="SERINE HYDROXYMETHYLTRANSFERASE"/>
    <property type="match status" value="1"/>
</dbReference>
<dbReference type="Pfam" id="PF00464">
    <property type="entry name" value="SHMT"/>
    <property type="match status" value="1"/>
</dbReference>
<dbReference type="PIRSF" id="PIRSF000412">
    <property type="entry name" value="SHMT"/>
    <property type="match status" value="1"/>
</dbReference>
<dbReference type="SUPFAM" id="SSF53383">
    <property type="entry name" value="PLP-dependent transferases"/>
    <property type="match status" value="1"/>
</dbReference>
<dbReference type="PROSITE" id="PS00096">
    <property type="entry name" value="SHMT"/>
    <property type="match status" value="1"/>
</dbReference>
<name>GLYA1_VIBVU</name>
<comment type="function">
    <text evidence="1">Catalyzes the reversible interconversion of serine and glycine with tetrahydrofolate (THF) serving as the one-carbon carrier. This reaction serves as the major source of one-carbon groups required for the biosynthesis of purines, thymidylate, methionine, and other important biomolecules. Also exhibits THF-independent aldolase activity toward beta-hydroxyamino acids, producing glycine and aldehydes, via a retro-aldol mechanism.</text>
</comment>
<comment type="catalytic activity">
    <reaction evidence="1">
        <text>(6R)-5,10-methylene-5,6,7,8-tetrahydrofolate + glycine + H2O = (6S)-5,6,7,8-tetrahydrofolate + L-serine</text>
        <dbReference type="Rhea" id="RHEA:15481"/>
        <dbReference type="ChEBI" id="CHEBI:15377"/>
        <dbReference type="ChEBI" id="CHEBI:15636"/>
        <dbReference type="ChEBI" id="CHEBI:33384"/>
        <dbReference type="ChEBI" id="CHEBI:57305"/>
        <dbReference type="ChEBI" id="CHEBI:57453"/>
        <dbReference type="EC" id="2.1.2.1"/>
    </reaction>
</comment>
<comment type="cofactor">
    <cofactor evidence="1">
        <name>pyridoxal 5'-phosphate</name>
        <dbReference type="ChEBI" id="CHEBI:597326"/>
    </cofactor>
</comment>
<comment type="pathway">
    <text evidence="1">One-carbon metabolism; tetrahydrofolate interconversion.</text>
</comment>
<comment type="pathway">
    <text evidence="1">Amino-acid biosynthesis; glycine biosynthesis; glycine from L-serine: step 1/1.</text>
</comment>
<comment type="subunit">
    <text evidence="1">Homodimer.</text>
</comment>
<comment type="subcellular location">
    <subcellularLocation>
        <location evidence="1">Cytoplasm</location>
    </subcellularLocation>
</comment>
<comment type="similarity">
    <text evidence="1">Belongs to the SHMT family.</text>
</comment>
<sequence>MLKRDMNIADYDAELFAAIQEETLRQEEHIELIASENYTSPRVMEAQGSQLTNKYAEGYPGKRYYGGCEYVDKAEALAIDRACQLFGCEYANVQPHSGSQANSAVYMALLNPGDTVLGMSLAHGGHLTHGSPVNFSGKHYNVIPYGIDEAGQINYDEMETLALEHKPKMIIGGFSAYSQIVDWKRMREIADKVDAYLFVDMAHVAGLIAAGEYPTPVPHAHVVTTTTHKTLAGPRGGLILSNAGEDMYKKLNSAVFPGGQGGPLMHVIAGKAVAFKEAMEPEFKAYQARVVKNAKAMVAQFQERGYKIVSNGTENHLFLVDLIDKDITGKDADAALGAANITVNKNSVPNDPRSPFVTSGIRVGTPAITRRGFTEADAKELANWMCDVLDNIGNEAVIEATKQKVLEICKRLPVYA</sequence>
<evidence type="ECO:0000255" key="1">
    <source>
        <dbReference type="HAMAP-Rule" id="MF_00051"/>
    </source>
</evidence>
<keyword id="KW-0028">Amino-acid biosynthesis</keyword>
<keyword id="KW-0963">Cytoplasm</keyword>
<keyword id="KW-0554">One-carbon metabolism</keyword>
<keyword id="KW-0663">Pyridoxal phosphate</keyword>
<keyword id="KW-0808">Transferase</keyword>
<reference key="1">
    <citation type="submission" date="2002-12" db="EMBL/GenBank/DDBJ databases">
        <title>Complete genome sequence of Vibrio vulnificus CMCP6.</title>
        <authorList>
            <person name="Rhee J.H."/>
            <person name="Kim S.Y."/>
            <person name="Chung S.S."/>
            <person name="Kim J.J."/>
            <person name="Moon Y.H."/>
            <person name="Jeong H."/>
            <person name="Choy H.E."/>
        </authorList>
    </citation>
    <scope>NUCLEOTIDE SEQUENCE [LARGE SCALE GENOMIC DNA]</scope>
    <source>
        <strain>CMCP6</strain>
    </source>
</reference>
<accession>Q8DFC9</accession>
<feature type="chain" id="PRO_0000113694" description="Serine hydroxymethyltransferase 1">
    <location>
        <begin position="1"/>
        <end position="416"/>
    </location>
</feature>
<feature type="binding site" evidence="1">
    <location>
        <position position="121"/>
    </location>
    <ligand>
        <name>(6S)-5,6,7,8-tetrahydrofolate</name>
        <dbReference type="ChEBI" id="CHEBI:57453"/>
    </ligand>
</feature>
<feature type="binding site" evidence="1">
    <location>
        <begin position="125"/>
        <end position="127"/>
    </location>
    <ligand>
        <name>(6S)-5,6,7,8-tetrahydrofolate</name>
        <dbReference type="ChEBI" id="CHEBI:57453"/>
    </ligand>
</feature>
<feature type="binding site" evidence="1">
    <location>
        <position position="245"/>
    </location>
    <ligand>
        <name>(6S)-5,6,7,8-tetrahydrofolate</name>
        <dbReference type="ChEBI" id="CHEBI:57453"/>
    </ligand>
</feature>
<feature type="binding site" evidence="1">
    <location>
        <begin position="354"/>
        <end position="356"/>
    </location>
    <ligand>
        <name>(6S)-5,6,7,8-tetrahydrofolate</name>
        <dbReference type="ChEBI" id="CHEBI:57453"/>
    </ligand>
</feature>
<feature type="site" description="Plays an important role in substrate specificity" evidence="1">
    <location>
        <position position="228"/>
    </location>
</feature>
<feature type="modified residue" description="N6-(pyridoxal phosphate)lysine" evidence="1">
    <location>
        <position position="229"/>
    </location>
</feature>
<protein>
    <recommendedName>
        <fullName evidence="1">Serine hydroxymethyltransferase 1</fullName>
        <shortName evidence="1">SHMT 1</shortName>
        <shortName evidence="1">Serine methylase 1</shortName>
        <ecNumber evidence="1">2.1.2.1</ecNumber>
    </recommendedName>
</protein>
<proteinExistence type="inferred from homology"/>